<comment type="function">
    <text evidence="2">Involved in both the arginine and lysine biosynthetic pathways.</text>
</comment>
<comment type="catalytic activity">
    <reaction evidence="2">
        <text>N(2)-acetyl-L-ornithine + 2-oxoglutarate = N-acetyl-L-glutamate 5-semialdehyde + L-glutamate</text>
        <dbReference type="Rhea" id="RHEA:18049"/>
        <dbReference type="ChEBI" id="CHEBI:16810"/>
        <dbReference type="ChEBI" id="CHEBI:29123"/>
        <dbReference type="ChEBI" id="CHEBI:29985"/>
        <dbReference type="ChEBI" id="CHEBI:57805"/>
        <dbReference type="EC" id="2.6.1.11"/>
    </reaction>
</comment>
<comment type="catalytic activity">
    <reaction evidence="2">
        <text>N-succinyl-(2S,6S)-2,6-diaminopimelate + 2-oxoglutarate = (S)-2-succinylamino-6-oxoheptanedioate + L-glutamate</text>
        <dbReference type="Rhea" id="RHEA:11960"/>
        <dbReference type="ChEBI" id="CHEBI:15685"/>
        <dbReference type="ChEBI" id="CHEBI:16810"/>
        <dbReference type="ChEBI" id="CHEBI:29985"/>
        <dbReference type="ChEBI" id="CHEBI:58087"/>
        <dbReference type="EC" id="2.6.1.17"/>
    </reaction>
</comment>
<comment type="cofactor">
    <cofactor evidence="2">
        <name>pyridoxal 5'-phosphate</name>
        <dbReference type="ChEBI" id="CHEBI:597326"/>
    </cofactor>
    <text evidence="2">Binds 1 pyridoxal phosphate per subunit.</text>
</comment>
<comment type="pathway">
    <text evidence="2">Amino-acid biosynthesis; L-arginine biosynthesis; N(2)-acetyl-L-ornithine from L-glutamate: step 4/4.</text>
</comment>
<comment type="pathway">
    <text evidence="2">Amino-acid biosynthesis; L-lysine biosynthesis via DAP pathway; LL-2,6-diaminopimelate from (S)-tetrahydrodipicolinate (succinylase route): step 2/3.</text>
</comment>
<comment type="subunit">
    <text evidence="2">Homodimer.</text>
</comment>
<comment type="subcellular location">
    <subcellularLocation>
        <location evidence="2">Cytoplasm</location>
    </subcellularLocation>
</comment>
<comment type="miscellaneous">
    <text evidence="1">The reaction catalyzed by ACOAT is highly reversible. This enzyme may also transaminate ornithine (By similarity).</text>
</comment>
<comment type="similarity">
    <text evidence="2">Belongs to the class-III pyridoxal-phosphate-dependent aminotransferase family. ArgD subfamily.</text>
</comment>
<keyword id="KW-0028">Amino-acid biosynthesis</keyword>
<keyword id="KW-0032">Aminotransferase</keyword>
<keyword id="KW-0055">Arginine biosynthesis</keyword>
<keyword id="KW-0963">Cytoplasm</keyword>
<keyword id="KW-0457">Lysine biosynthesis</keyword>
<keyword id="KW-0663">Pyridoxal phosphate</keyword>
<keyword id="KW-0808">Transferase</keyword>
<proteinExistence type="inferred from homology"/>
<evidence type="ECO:0000250" key="1"/>
<evidence type="ECO:0000255" key="2">
    <source>
        <dbReference type="HAMAP-Rule" id="MF_01107"/>
    </source>
</evidence>
<accession>Q8Z1Z3</accession>
<name>ARGD_SALTI</name>
<organism>
    <name type="scientific">Salmonella typhi</name>
    <dbReference type="NCBI Taxonomy" id="90370"/>
    <lineage>
        <taxon>Bacteria</taxon>
        <taxon>Pseudomonadati</taxon>
        <taxon>Pseudomonadota</taxon>
        <taxon>Gammaproteobacteria</taxon>
        <taxon>Enterobacterales</taxon>
        <taxon>Enterobacteriaceae</taxon>
        <taxon>Salmonella</taxon>
    </lineage>
</organism>
<gene>
    <name evidence="2" type="primary">argD</name>
    <name evidence="2" type="synonym">dapC</name>
    <name type="ordered locus">STY4328</name>
    <name type="ordered locus">t4037</name>
</gene>
<protein>
    <recommendedName>
        <fullName evidence="2">Acetylornithine/succinyldiaminopimelate aminotransferase</fullName>
        <shortName evidence="2">ACOAT</shortName>
        <shortName evidence="2">DapATase</shortName>
        <shortName evidence="2">Succinyldiaminopimelate transferase</shortName>
        <ecNumber evidence="2">2.6.1.11</ecNumber>
        <ecNumber evidence="2">2.6.1.17</ecNumber>
    </recommendedName>
</protein>
<feature type="initiator methionine" description="Removed" evidence="1">
    <location>
        <position position="1"/>
    </location>
</feature>
<feature type="chain" id="PRO_0000112776" description="Acetylornithine/succinyldiaminopimelate aminotransferase">
    <location>
        <begin position="2"/>
        <end position="405"/>
    </location>
</feature>
<feature type="binding site" evidence="2">
    <location>
        <begin position="108"/>
        <end position="109"/>
    </location>
    <ligand>
        <name>pyridoxal 5'-phosphate</name>
        <dbReference type="ChEBI" id="CHEBI:597326"/>
    </ligand>
</feature>
<feature type="binding site" evidence="2">
    <location>
        <position position="141"/>
    </location>
    <ligand>
        <name>pyridoxal 5'-phosphate</name>
        <dbReference type="ChEBI" id="CHEBI:597326"/>
    </ligand>
</feature>
<feature type="binding site" evidence="2">
    <location>
        <position position="144"/>
    </location>
    <ligand>
        <name>N(2)-acetyl-L-ornithine</name>
        <dbReference type="ChEBI" id="CHEBI:57805"/>
    </ligand>
</feature>
<feature type="binding site" evidence="2">
    <location>
        <begin position="226"/>
        <end position="229"/>
    </location>
    <ligand>
        <name>pyridoxal 5'-phosphate</name>
        <dbReference type="ChEBI" id="CHEBI:597326"/>
    </ligand>
</feature>
<feature type="binding site" evidence="2">
    <location>
        <position position="283"/>
    </location>
    <ligand>
        <name>N(2)-acetyl-L-ornithine</name>
        <dbReference type="ChEBI" id="CHEBI:57805"/>
    </ligand>
</feature>
<feature type="binding site" evidence="2">
    <location>
        <position position="284"/>
    </location>
    <ligand>
        <name>pyridoxal 5'-phosphate</name>
        <dbReference type="ChEBI" id="CHEBI:597326"/>
    </ligand>
</feature>
<feature type="modified residue" description="N6-(pyridoxal phosphate)lysine" evidence="2">
    <location>
        <position position="255"/>
    </location>
</feature>
<dbReference type="EC" id="2.6.1.11" evidence="2"/>
<dbReference type="EC" id="2.6.1.17" evidence="2"/>
<dbReference type="EMBL" id="AL513382">
    <property type="protein sequence ID" value="CAD08145.1"/>
    <property type="molecule type" value="Genomic_DNA"/>
</dbReference>
<dbReference type="EMBL" id="AE014613">
    <property type="protein sequence ID" value="AAO71506.1"/>
    <property type="molecule type" value="Genomic_DNA"/>
</dbReference>
<dbReference type="RefSeq" id="NP_458434.1">
    <property type="nucleotide sequence ID" value="NC_003198.1"/>
</dbReference>
<dbReference type="RefSeq" id="WP_000190017.1">
    <property type="nucleotide sequence ID" value="NZ_WSUR01000001.1"/>
</dbReference>
<dbReference type="SMR" id="Q8Z1Z3"/>
<dbReference type="STRING" id="220341.gene:17588158"/>
<dbReference type="KEGG" id="stt:t4037"/>
<dbReference type="KEGG" id="sty:STY4328"/>
<dbReference type="PATRIC" id="fig|220341.7.peg.4423"/>
<dbReference type="eggNOG" id="COG4992">
    <property type="taxonomic scope" value="Bacteria"/>
</dbReference>
<dbReference type="HOGENOM" id="CLU_016922_10_1_6"/>
<dbReference type="OMA" id="MVPGFKY"/>
<dbReference type="OrthoDB" id="9801052at2"/>
<dbReference type="UniPathway" id="UPA00034">
    <property type="reaction ID" value="UER00020"/>
</dbReference>
<dbReference type="UniPathway" id="UPA00068">
    <property type="reaction ID" value="UER00109"/>
</dbReference>
<dbReference type="Proteomes" id="UP000000541">
    <property type="component" value="Chromosome"/>
</dbReference>
<dbReference type="Proteomes" id="UP000002670">
    <property type="component" value="Chromosome"/>
</dbReference>
<dbReference type="GO" id="GO:0005737">
    <property type="term" value="C:cytoplasm"/>
    <property type="evidence" value="ECO:0007669"/>
    <property type="project" value="UniProtKB-SubCell"/>
</dbReference>
<dbReference type="GO" id="GO:0042802">
    <property type="term" value="F:identical protein binding"/>
    <property type="evidence" value="ECO:0007669"/>
    <property type="project" value="TreeGrafter"/>
</dbReference>
<dbReference type="GO" id="GO:0003992">
    <property type="term" value="F:N2-acetyl-L-ornithine:2-oxoglutarate 5-aminotransferase activity"/>
    <property type="evidence" value="ECO:0007669"/>
    <property type="project" value="UniProtKB-UniRule"/>
</dbReference>
<dbReference type="GO" id="GO:0030170">
    <property type="term" value="F:pyridoxal phosphate binding"/>
    <property type="evidence" value="ECO:0007669"/>
    <property type="project" value="InterPro"/>
</dbReference>
<dbReference type="GO" id="GO:0009016">
    <property type="term" value="F:succinyldiaminopimelate transaminase activity"/>
    <property type="evidence" value="ECO:0007669"/>
    <property type="project" value="UniProtKB-UniRule"/>
</dbReference>
<dbReference type="GO" id="GO:0006526">
    <property type="term" value="P:L-arginine biosynthetic process"/>
    <property type="evidence" value="ECO:0007669"/>
    <property type="project" value="UniProtKB-UniRule"/>
</dbReference>
<dbReference type="GO" id="GO:0009089">
    <property type="term" value="P:lysine biosynthetic process via diaminopimelate"/>
    <property type="evidence" value="ECO:0007669"/>
    <property type="project" value="UniProtKB-UniRule"/>
</dbReference>
<dbReference type="CDD" id="cd00610">
    <property type="entry name" value="OAT_like"/>
    <property type="match status" value="1"/>
</dbReference>
<dbReference type="FunFam" id="3.40.640.10:FF:000004">
    <property type="entry name" value="Acetylornithine aminotransferase"/>
    <property type="match status" value="1"/>
</dbReference>
<dbReference type="FunFam" id="3.90.1150.10:FF:000009">
    <property type="entry name" value="Succinylornithine transaminase"/>
    <property type="match status" value="1"/>
</dbReference>
<dbReference type="Gene3D" id="3.90.1150.10">
    <property type="entry name" value="Aspartate Aminotransferase, domain 1"/>
    <property type="match status" value="1"/>
</dbReference>
<dbReference type="Gene3D" id="3.40.640.10">
    <property type="entry name" value="Type I PLP-dependent aspartate aminotransferase-like (Major domain)"/>
    <property type="match status" value="1"/>
</dbReference>
<dbReference type="HAMAP" id="MF_01107">
    <property type="entry name" value="ArgD_aminotrans_3"/>
    <property type="match status" value="1"/>
</dbReference>
<dbReference type="InterPro" id="IPR017652">
    <property type="entry name" value="Ac/SucOrn_transaminase_bac"/>
</dbReference>
<dbReference type="InterPro" id="IPR004636">
    <property type="entry name" value="AcOrn/SuccOrn_fam"/>
</dbReference>
<dbReference type="InterPro" id="IPR005814">
    <property type="entry name" value="Aminotrans_3"/>
</dbReference>
<dbReference type="InterPro" id="IPR049704">
    <property type="entry name" value="Aminotrans_3_PPA_site"/>
</dbReference>
<dbReference type="InterPro" id="IPR050103">
    <property type="entry name" value="Class-III_PLP-dep_AT"/>
</dbReference>
<dbReference type="InterPro" id="IPR015424">
    <property type="entry name" value="PyrdxlP-dep_Trfase"/>
</dbReference>
<dbReference type="InterPro" id="IPR015421">
    <property type="entry name" value="PyrdxlP-dep_Trfase_major"/>
</dbReference>
<dbReference type="InterPro" id="IPR015422">
    <property type="entry name" value="PyrdxlP-dep_Trfase_small"/>
</dbReference>
<dbReference type="NCBIfam" id="TIGR03246">
    <property type="entry name" value="arg_catab_astC"/>
    <property type="match status" value="1"/>
</dbReference>
<dbReference type="NCBIfam" id="TIGR00707">
    <property type="entry name" value="argD"/>
    <property type="match status" value="1"/>
</dbReference>
<dbReference type="NCBIfam" id="NF002325">
    <property type="entry name" value="PRK01278.1"/>
    <property type="match status" value="1"/>
</dbReference>
<dbReference type="NCBIfam" id="NF003468">
    <property type="entry name" value="PRK05093.1"/>
    <property type="match status" value="1"/>
</dbReference>
<dbReference type="NCBIfam" id="NF009047">
    <property type="entry name" value="PRK12381.1"/>
    <property type="match status" value="1"/>
</dbReference>
<dbReference type="PANTHER" id="PTHR11986:SF122">
    <property type="entry name" value="ACETYLORNITHINE_SUCCINYLDIAMINOPIMELATE AMINOTRANSFERASE"/>
    <property type="match status" value="1"/>
</dbReference>
<dbReference type="PANTHER" id="PTHR11986">
    <property type="entry name" value="AMINOTRANSFERASE CLASS III"/>
    <property type="match status" value="1"/>
</dbReference>
<dbReference type="Pfam" id="PF00202">
    <property type="entry name" value="Aminotran_3"/>
    <property type="match status" value="1"/>
</dbReference>
<dbReference type="PIRSF" id="PIRSF000521">
    <property type="entry name" value="Transaminase_4ab_Lys_Orn"/>
    <property type="match status" value="1"/>
</dbReference>
<dbReference type="SUPFAM" id="SSF53383">
    <property type="entry name" value="PLP-dependent transferases"/>
    <property type="match status" value="1"/>
</dbReference>
<dbReference type="PROSITE" id="PS00600">
    <property type="entry name" value="AA_TRANSFER_CLASS_3"/>
    <property type="match status" value="1"/>
</dbReference>
<sequence>MATEQTAITRATFDEVILPVYAPADFIPVKGKGSRVWDQQGKEYIDFAGGIAVTALGHCHPALVEALKSQGETLWHTSNVFTNEPALCLGRKLIDATFAERVLFMNSGTEANETAFKLARHYACVRHSPFKTKIIAFQNAFHGRSLFTVSVGGQPKYSDGFGPKPADIIHVPFNDLHAVKAVMDDHTCAVVVEPIQGEGGVQAATPEFLKGLRDLCDKHQALLVFDEVQCGMGRTGDLFAYMHYGVTPDILTSAKALGGGFPVSAMLTTQEIASAFHVGSHGSTYGGNPLACAVAGAAFDIINTPEVLQGIHTKRQQFVQHLQAIDEQFDIFSDIRGMGLLIGAELKPKYKGRARDFLYAGAEAGVMVLNAGADVMRFAPSLVVEEADINEGMQRFAQAVGKVVA</sequence>
<reference key="1">
    <citation type="journal article" date="2001" name="Nature">
        <title>Complete genome sequence of a multiple drug resistant Salmonella enterica serovar Typhi CT18.</title>
        <authorList>
            <person name="Parkhill J."/>
            <person name="Dougan G."/>
            <person name="James K.D."/>
            <person name="Thomson N.R."/>
            <person name="Pickard D."/>
            <person name="Wain J."/>
            <person name="Churcher C.M."/>
            <person name="Mungall K.L."/>
            <person name="Bentley S.D."/>
            <person name="Holden M.T.G."/>
            <person name="Sebaihia M."/>
            <person name="Baker S."/>
            <person name="Basham D."/>
            <person name="Brooks K."/>
            <person name="Chillingworth T."/>
            <person name="Connerton P."/>
            <person name="Cronin A."/>
            <person name="Davis P."/>
            <person name="Davies R.M."/>
            <person name="Dowd L."/>
            <person name="White N."/>
            <person name="Farrar J."/>
            <person name="Feltwell T."/>
            <person name="Hamlin N."/>
            <person name="Haque A."/>
            <person name="Hien T.T."/>
            <person name="Holroyd S."/>
            <person name="Jagels K."/>
            <person name="Krogh A."/>
            <person name="Larsen T.S."/>
            <person name="Leather S."/>
            <person name="Moule S."/>
            <person name="O'Gaora P."/>
            <person name="Parry C."/>
            <person name="Quail M.A."/>
            <person name="Rutherford K.M."/>
            <person name="Simmonds M."/>
            <person name="Skelton J."/>
            <person name="Stevens K."/>
            <person name="Whitehead S."/>
            <person name="Barrell B.G."/>
        </authorList>
    </citation>
    <scope>NUCLEOTIDE SEQUENCE [LARGE SCALE GENOMIC DNA]</scope>
    <source>
        <strain>CT18</strain>
    </source>
</reference>
<reference key="2">
    <citation type="journal article" date="2003" name="J. Bacteriol.">
        <title>Comparative genomics of Salmonella enterica serovar Typhi strains Ty2 and CT18.</title>
        <authorList>
            <person name="Deng W."/>
            <person name="Liou S.-R."/>
            <person name="Plunkett G. III"/>
            <person name="Mayhew G.F."/>
            <person name="Rose D.J."/>
            <person name="Burland V."/>
            <person name="Kodoyianni V."/>
            <person name="Schwartz D.C."/>
            <person name="Blattner F.R."/>
        </authorList>
    </citation>
    <scope>NUCLEOTIDE SEQUENCE [LARGE SCALE GENOMIC DNA]</scope>
    <source>
        <strain>ATCC 700931 / Ty2</strain>
    </source>
</reference>